<protein>
    <recommendedName>
        <fullName evidence="1">Small ribosomal subunit protein uS2</fullName>
    </recommendedName>
    <alternativeName>
        <fullName evidence="3">30S ribosomal protein S2</fullName>
    </alternativeName>
</protein>
<name>RS2_STRMK</name>
<comment type="similarity">
    <text evidence="1">Belongs to the universal ribosomal protein uS2 family.</text>
</comment>
<dbReference type="EMBL" id="AM743169">
    <property type="protein sequence ID" value="CAQ45043.1"/>
    <property type="molecule type" value="Genomic_DNA"/>
</dbReference>
<dbReference type="RefSeq" id="WP_005408748.1">
    <property type="nucleotide sequence ID" value="NC_010943.1"/>
</dbReference>
<dbReference type="SMR" id="B2FIA9"/>
<dbReference type="EnsemblBacteria" id="CAQ45043">
    <property type="protein sequence ID" value="CAQ45043"/>
    <property type="gene ID" value="Smlt1507"/>
</dbReference>
<dbReference type="GeneID" id="97260441"/>
<dbReference type="KEGG" id="sml:Smlt1507"/>
<dbReference type="eggNOG" id="COG0052">
    <property type="taxonomic scope" value="Bacteria"/>
</dbReference>
<dbReference type="HOGENOM" id="CLU_040318_1_2_6"/>
<dbReference type="Proteomes" id="UP000008840">
    <property type="component" value="Chromosome"/>
</dbReference>
<dbReference type="GO" id="GO:0022627">
    <property type="term" value="C:cytosolic small ribosomal subunit"/>
    <property type="evidence" value="ECO:0007669"/>
    <property type="project" value="TreeGrafter"/>
</dbReference>
<dbReference type="GO" id="GO:0003735">
    <property type="term" value="F:structural constituent of ribosome"/>
    <property type="evidence" value="ECO:0007669"/>
    <property type="project" value="InterPro"/>
</dbReference>
<dbReference type="GO" id="GO:0006412">
    <property type="term" value="P:translation"/>
    <property type="evidence" value="ECO:0007669"/>
    <property type="project" value="UniProtKB-UniRule"/>
</dbReference>
<dbReference type="CDD" id="cd01425">
    <property type="entry name" value="RPS2"/>
    <property type="match status" value="1"/>
</dbReference>
<dbReference type="FunFam" id="1.10.287.610:FF:000001">
    <property type="entry name" value="30S ribosomal protein S2"/>
    <property type="match status" value="1"/>
</dbReference>
<dbReference type="Gene3D" id="3.40.50.10490">
    <property type="entry name" value="Glucose-6-phosphate isomerase like protein, domain 1"/>
    <property type="match status" value="1"/>
</dbReference>
<dbReference type="Gene3D" id="1.10.287.610">
    <property type="entry name" value="Helix hairpin bin"/>
    <property type="match status" value="1"/>
</dbReference>
<dbReference type="HAMAP" id="MF_00291_B">
    <property type="entry name" value="Ribosomal_uS2_B"/>
    <property type="match status" value="1"/>
</dbReference>
<dbReference type="InterPro" id="IPR001865">
    <property type="entry name" value="Ribosomal_uS2"/>
</dbReference>
<dbReference type="InterPro" id="IPR005706">
    <property type="entry name" value="Ribosomal_uS2_bac/mit/plastid"/>
</dbReference>
<dbReference type="InterPro" id="IPR018130">
    <property type="entry name" value="Ribosomal_uS2_CS"/>
</dbReference>
<dbReference type="InterPro" id="IPR023591">
    <property type="entry name" value="Ribosomal_uS2_flav_dom_sf"/>
</dbReference>
<dbReference type="NCBIfam" id="TIGR01011">
    <property type="entry name" value="rpsB_bact"/>
    <property type="match status" value="1"/>
</dbReference>
<dbReference type="PANTHER" id="PTHR12534">
    <property type="entry name" value="30S RIBOSOMAL PROTEIN S2 PROKARYOTIC AND ORGANELLAR"/>
    <property type="match status" value="1"/>
</dbReference>
<dbReference type="PANTHER" id="PTHR12534:SF0">
    <property type="entry name" value="SMALL RIBOSOMAL SUBUNIT PROTEIN US2M"/>
    <property type="match status" value="1"/>
</dbReference>
<dbReference type="Pfam" id="PF00318">
    <property type="entry name" value="Ribosomal_S2"/>
    <property type="match status" value="1"/>
</dbReference>
<dbReference type="PRINTS" id="PR00395">
    <property type="entry name" value="RIBOSOMALS2"/>
</dbReference>
<dbReference type="SUPFAM" id="SSF52313">
    <property type="entry name" value="Ribosomal protein S2"/>
    <property type="match status" value="1"/>
</dbReference>
<dbReference type="PROSITE" id="PS00962">
    <property type="entry name" value="RIBOSOMAL_S2_1"/>
    <property type="match status" value="1"/>
</dbReference>
<dbReference type="PROSITE" id="PS00963">
    <property type="entry name" value="RIBOSOMAL_S2_2"/>
    <property type="match status" value="1"/>
</dbReference>
<reference key="1">
    <citation type="journal article" date="2008" name="Genome Biol.">
        <title>The complete genome, comparative and functional analysis of Stenotrophomonas maltophilia reveals an organism heavily shielded by drug resistance determinants.</title>
        <authorList>
            <person name="Crossman L.C."/>
            <person name="Gould V.C."/>
            <person name="Dow J.M."/>
            <person name="Vernikos G.S."/>
            <person name="Okazaki A."/>
            <person name="Sebaihia M."/>
            <person name="Saunders D."/>
            <person name="Arrowsmith C."/>
            <person name="Carver T."/>
            <person name="Peters N."/>
            <person name="Adlem E."/>
            <person name="Kerhornou A."/>
            <person name="Lord A."/>
            <person name="Murphy L."/>
            <person name="Seeger K."/>
            <person name="Squares R."/>
            <person name="Rutter S."/>
            <person name="Quail M.A."/>
            <person name="Rajandream M.A."/>
            <person name="Harris D."/>
            <person name="Churcher C."/>
            <person name="Bentley S.D."/>
            <person name="Parkhill J."/>
            <person name="Thomson N.R."/>
            <person name="Avison M.B."/>
        </authorList>
    </citation>
    <scope>NUCLEOTIDE SEQUENCE [LARGE SCALE GENOMIC DNA]</scope>
    <source>
        <strain>K279a</strain>
    </source>
</reference>
<evidence type="ECO:0000255" key="1">
    <source>
        <dbReference type="HAMAP-Rule" id="MF_00291"/>
    </source>
</evidence>
<evidence type="ECO:0000256" key="2">
    <source>
        <dbReference type="SAM" id="MobiDB-lite"/>
    </source>
</evidence>
<evidence type="ECO:0000305" key="3"/>
<feature type="chain" id="PRO_1000115062" description="Small ribosomal subunit protein uS2">
    <location>
        <begin position="1"/>
        <end position="268"/>
    </location>
</feature>
<feature type="region of interest" description="Disordered" evidence="2">
    <location>
        <begin position="233"/>
        <end position="268"/>
    </location>
</feature>
<gene>
    <name evidence="1" type="primary">rpsB</name>
    <name type="ordered locus">Smlt1507</name>
</gene>
<proteinExistence type="inferred from homology"/>
<sequence>MPQVTMRQMLEAGVHFGHQTRYWNPKMAPYIFGARGKIHIINLEKTVPLFNDAMNFISSVAQKRGTVLFLGTKRSARETIKEEAERCGMPFMNQRWLGGTLTNFRTVKQSVARLKELEAGETDGTFEKLVKHEVLGLRRERDKLEASLGGIKDMNRLPDAIFVIDIGHEDIAIKEAKKLGIPVIAVVDTNYNPELVDYAIPGNDDAIRAVQLYARAAADAVLEGKAAAPHAASVREEEFAEAAAEGEEKPARRAPAKKAAKKGDDAQA</sequence>
<accession>B2FIA9</accession>
<organism>
    <name type="scientific">Stenotrophomonas maltophilia (strain K279a)</name>
    <dbReference type="NCBI Taxonomy" id="522373"/>
    <lineage>
        <taxon>Bacteria</taxon>
        <taxon>Pseudomonadati</taxon>
        <taxon>Pseudomonadota</taxon>
        <taxon>Gammaproteobacteria</taxon>
        <taxon>Lysobacterales</taxon>
        <taxon>Lysobacteraceae</taxon>
        <taxon>Stenotrophomonas</taxon>
        <taxon>Stenotrophomonas maltophilia group</taxon>
    </lineage>
</organism>
<keyword id="KW-1185">Reference proteome</keyword>
<keyword id="KW-0687">Ribonucleoprotein</keyword>
<keyword id="KW-0689">Ribosomal protein</keyword>